<sequence length="363" mass="42118">MTSVSPRYRNVPVPKVFLSFRGEEIRHGFISHLADALERYGIMFIIDKDEQRGNDLTSLLLRIKESKVALVIFSSRFAESRFCMDEIVKMKECVDERKLLVIPIFYKVRARDVSGRTGDFGKKFWALAQKSRGCQIKEWMEALECISNKMGLSLGDGRSEADFIKEIVKEVERVLATFTSEDTEDHHCQTVKLLKGLVVGCLAHQELPLVLVFTQVYYYVKFSIFFIEEIFSSCFRKGFVLKPCKEDLQINSISIPGIDLENFKNMMQQAMYELNQMLLQSLGNIDPHRDVAFENQPQDQPDSPIALPEERRVALEATKFCGHAAYWWNQTKTTRARIGKVLIHFWEKLKKKFKDTYDRTVRI</sequence>
<proteinExistence type="evidence at protein level"/>
<evidence type="ECO:0000250" key="1">
    <source>
        <dbReference type="UniProtKB" id="V9M398"/>
    </source>
</evidence>
<evidence type="ECO:0000255" key="2">
    <source>
        <dbReference type="PROSITE-ProRule" id="PRU00204"/>
    </source>
</evidence>
<evidence type="ECO:0000269" key="3">
    <source>
    </source>
</evidence>
<evidence type="ECO:0000269" key="4">
    <source>
    </source>
</evidence>
<evidence type="ECO:0000303" key="5">
    <source>
    </source>
</evidence>
<evidence type="ECO:0000305" key="6"/>
<evidence type="ECO:0000305" key="7">
    <source>
    </source>
</evidence>
<evidence type="ECO:0000312" key="8">
    <source>
        <dbReference type="EMBL" id="AAG11420.1"/>
    </source>
</evidence>
<evidence type="ECO:0000312" key="9">
    <source>
        <dbReference type="EMBL" id="AEE32160.1"/>
    </source>
</evidence>
<gene>
    <name evidence="5" type="primary">RBA1</name>
    <name evidence="9" type="ordered locus">At1g47370</name>
    <name evidence="8" type="ORF">T3F24.3</name>
</gene>
<accession>F4HT77</accession>
<accession>Q9FX07</accession>
<reference key="1">
    <citation type="journal article" date="2000" name="Nature">
        <title>Sequence and analysis of chromosome 1 of the plant Arabidopsis thaliana.</title>
        <authorList>
            <person name="Theologis A."/>
            <person name="Ecker J.R."/>
            <person name="Palm C.J."/>
            <person name="Federspiel N.A."/>
            <person name="Kaul S."/>
            <person name="White O."/>
            <person name="Alonso J."/>
            <person name="Altafi H."/>
            <person name="Araujo R."/>
            <person name="Bowman C.L."/>
            <person name="Brooks S.Y."/>
            <person name="Buehler E."/>
            <person name="Chan A."/>
            <person name="Chao Q."/>
            <person name="Chen H."/>
            <person name="Cheuk R.F."/>
            <person name="Chin C.W."/>
            <person name="Chung M.K."/>
            <person name="Conn L."/>
            <person name="Conway A.B."/>
            <person name="Conway A.R."/>
            <person name="Creasy T.H."/>
            <person name="Dewar K."/>
            <person name="Dunn P."/>
            <person name="Etgu P."/>
            <person name="Feldblyum T.V."/>
            <person name="Feng J.-D."/>
            <person name="Fong B."/>
            <person name="Fujii C.Y."/>
            <person name="Gill J.E."/>
            <person name="Goldsmith A.D."/>
            <person name="Haas B."/>
            <person name="Hansen N.F."/>
            <person name="Hughes B."/>
            <person name="Huizar L."/>
            <person name="Hunter J.L."/>
            <person name="Jenkins J."/>
            <person name="Johnson-Hopson C."/>
            <person name="Khan S."/>
            <person name="Khaykin E."/>
            <person name="Kim C.J."/>
            <person name="Koo H.L."/>
            <person name="Kremenetskaia I."/>
            <person name="Kurtz D.B."/>
            <person name="Kwan A."/>
            <person name="Lam B."/>
            <person name="Langin-Hooper S."/>
            <person name="Lee A."/>
            <person name="Lee J.M."/>
            <person name="Lenz C.A."/>
            <person name="Li J.H."/>
            <person name="Li Y.-P."/>
            <person name="Lin X."/>
            <person name="Liu S.X."/>
            <person name="Liu Z.A."/>
            <person name="Luros J.S."/>
            <person name="Maiti R."/>
            <person name="Marziali A."/>
            <person name="Militscher J."/>
            <person name="Miranda M."/>
            <person name="Nguyen M."/>
            <person name="Nierman W.C."/>
            <person name="Osborne B.I."/>
            <person name="Pai G."/>
            <person name="Peterson J."/>
            <person name="Pham P.K."/>
            <person name="Rizzo M."/>
            <person name="Rooney T."/>
            <person name="Rowley D."/>
            <person name="Sakano H."/>
            <person name="Salzberg S.L."/>
            <person name="Schwartz J.R."/>
            <person name="Shinn P."/>
            <person name="Southwick A.M."/>
            <person name="Sun H."/>
            <person name="Tallon L.J."/>
            <person name="Tambunga G."/>
            <person name="Toriumi M.J."/>
            <person name="Town C.D."/>
            <person name="Utterback T."/>
            <person name="Van Aken S."/>
            <person name="Vaysberg M."/>
            <person name="Vysotskaia V.S."/>
            <person name="Walker M."/>
            <person name="Wu D."/>
            <person name="Yu G."/>
            <person name="Fraser C.M."/>
            <person name="Venter J.C."/>
            <person name="Davis R.W."/>
        </authorList>
    </citation>
    <scope>NUCLEOTIDE SEQUENCE [LARGE SCALE GENOMIC DNA]</scope>
    <source>
        <strain>cv. Columbia</strain>
    </source>
</reference>
<reference key="2">
    <citation type="journal article" date="2017" name="Plant J.">
        <title>Araport11: a complete reannotation of the Arabidopsis thaliana reference genome.</title>
        <authorList>
            <person name="Cheng C.Y."/>
            <person name="Krishnakumar V."/>
            <person name="Chan A.P."/>
            <person name="Thibaud-Nissen F."/>
            <person name="Schobel S."/>
            <person name="Town C.D."/>
        </authorList>
    </citation>
    <scope>GENOME REANNOTATION</scope>
    <source>
        <strain>cv. Columbia</strain>
    </source>
</reference>
<reference key="3">
    <citation type="journal article" date="2017" name="Proc. Natl. Acad. Sci. U.S.A.">
        <title>TIR-only protein RBA1 recognizes a pathogen effector to regulate cell death in Arabidopsis.</title>
        <authorList>
            <person name="Nishimura M.T."/>
            <person name="Anderson R.G."/>
            <person name="Cherkis K.A."/>
            <person name="Law T.F."/>
            <person name="Liu Q.L."/>
            <person name="Machius M."/>
            <person name="Nimchuk Z.L."/>
            <person name="Yang L."/>
            <person name="Chung E.H."/>
            <person name="El Kasmi F."/>
            <person name="Hyunh M."/>
            <person name="Osborne Nishimura E."/>
            <person name="Sondek J.E."/>
            <person name="Dangl J.L."/>
        </authorList>
    </citation>
    <scope>FUNCTION</scope>
    <scope>SUBCELLULAR LOCATION</scope>
    <scope>SUBUNIT</scope>
    <scope>INDUCTION</scope>
    <scope>ACTIVE SITE</scope>
    <scope>MUTAGENESIS OF 31-SER-HIS-32; SER-31; HIS-32; LYS-149 AND GLY-151</scope>
</reference>
<reference key="4">
    <citation type="journal article" date="2019" name="Science">
        <title>TIR domains of plant immune receptors are NAD+-cleaving enzymes that promote cell death.</title>
        <authorList>
            <person name="Wan L."/>
            <person name="Essuman K."/>
            <person name="Anderson R.G."/>
            <person name="Sasaki Y."/>
            <person name="Monteiro F."/>
            <person name="Chung E.H."/>
            <person name="Osborne Nishimura E."/>
            <person name="DiAntonio A."/>
            <person name="Milbrandt J."/>
            <person name="Dangl J.L."/>
            <person name="Nishimura M.T."/>
        </authorList>
    </citation>
    <scope>FUNCTION</scope>
    <scope>CATALYTIC ACTIVITY</scope>
    <scope>SUBUNIT</scope>
    <scope>MUTAGENESIS OF GLU-86</scope>
</reference>
<comment type="function">
    <text evidence="3 4">Disease resistance (R) protein that specifically recognizes the HopBA1 type III effector protein from P.syringae, and triggers cell death (PubMed:28137883). Acts as a NAD(+) hydrolase (NADase): in response to pathogen-recognition, catalyzes cleavage of NAD(+) into ADP-D-ribose (ADPR) and nicotinamide; NAD(+) cleavage triggering a defense system that promotes cell death (PubMed:31439793). In addition to ADPR, also generates a cyclization variant of cyclic ADPR (cADPR), termed v-cADPR, for which the cyclizing bond is unknown (PubMed:31439793). Also able to hydrolyze NADP(+), but not other NAD(+)-related molecules (PubMed:31439793).</text>
</comment>
<comment type="catalytic activity">
    <reaction evidence="4">
        <text>NAD(+) + H2O = ADP-D-ribose + nicotinamide + H(+)</text>
        <dbReference type="Rhea" id="RHEA:16301"/>
        <dbReference type="ChEBI" id="CHEBI:15377"/>
        <dbReference type="ChEBI" id="CHEBI:15378"/>
        <dbReference type="ChEBI" id="CHEBI:17154"/>
        <dbReference type="ChEBI" id="CHEBI:57540"/>
        <dbReference type="ChEBI" id="CHEBI:57967"/>
        <dbReference type="EC" id="3.2.2.6"/>
    </reaction>
    <physiologicalReaction direction="left-to-right" evidence="4">
        <dbReference type="Rhea" id="RHEA:16302"/>
    </physiologicalReaction>
</comment>
<comment type="catalytic activity">
    <reaction evidence="4">
        <text>NADP(+) + H2O = ADP-D-ribose 2'-phosphate + nicotinamide + H(+)</text>
        <dbReference type="Rhea" id="RHEA:19849"/>
        <dbReference type="ChEBI" id="CHEBI:15377"/>
        <dbReference type="ChEBI" id="CHEBI:15378"/>
        <dbReference type="ChEBI" id="CHEBI:17154"/>
        <dbReference type="ChEBI" id="CHEBI:58349"/>
        <dbReference type="ChEBI" id="CHEBI:58673"/>
    </reaction>
    <physiologicalReaction direction="left-to-right" evidence="4">
        <dbReference type="Rhea" id="RHEA:19850"/>
    </physiologicalReaction>
</comment>
<comment type="subunit">
    <text evidence="3 4">Homooligomer; homooligomerization is required for activity.</text>
</comment>
<comment type="subcellular location">
    <subcellularLocation>
        <location evidence="3">Cytoplasm</location>
    </subcellularLocation>
    <subcellularLocation>
        <location evidence="3">Nucleus</location>
        <location evidence="3">Nucleoplasm</location>
    </subcellularLocation>
    <text evidence="3">Forms aggregate-like cyto-nucleoplasmic puncta.</text>
</comment>
<comment type="induction">
    <text evidence="3">Accumulates during immune responses activated by a variety of NLR proteins.</text>
</comment>
<comment type="domain">
    <text evidence="4 6">The TIR domain catalyzes the NAD(+) cleavage (NADase) activity (PubMed:31439793). In contrast to classical TIR-NB-LRR receptor-like proteins, only contains a TIR domain (Probable).</text>
</comment>
<comment type="domain">
    <text evidence="2">The TIR domain mediates NAD(+) hydrolase (NADase) activity. Self-association of TIR domains is required for NADase activity.</text>
</comment>
<comment type="sequence caution" evidence="6">
    <conflict type="erroneous gene model prediction">
        <sequence resource="EMBL-CDS" id="AAG11420"/>
    </conflict>
</comment>
<protein>
    <recommendedName>
        <fullName evidence="6">Disease resistance protein RBA1</fullName>
    </recommendedName>
    <alternativeName>
        <fullName>NAD(+) hydrolase RBA1</fullName>
        <ecNumber evidence="4">3.2.2.6</ecNumber>
    </alternativeName>
    <alternativeName>
        <fullName evidence="6">NADP(+) hydrolase RBA1</fullName>
        <ecNumber evidence="4">3.2.2.-</ecNumber>
    </alternativeName>
    <alternativeName>
        <fullName evidence="5">Response to HopBA1 protein</fullName>
        <shortName evidence="5">RBA1</shortName>
    </alternativeName>
</protein>
<dbReference type="EC" id="3.2.2.6" evidence="4"/>
<dbReference type="EC" id="3.2.2.-" evidence="4"/>
<dbReference type="EMBL" id="AC015449">
    <property type="protein sequence ID" value="AAG11420.1"/>
    <property type="status" value="ALT_SEQ"/>
    <property type="molecule type" value="Genomic_DNA"/>
</dbReference>
<dbReference type="EMBL" id="CP002684">
    <property type="protein sequence ID" value="AEE32160.1"/>
    <property type="molecule type" value="Genomic_DNA"/>
</dbReference>
<dbReference type="PIR" id="D96514">
    <property type="entry name" value="D96514"/>
</dbReference>
<dbReference type="RefSeq" id="NP_175170.1">
    <property type="nucleotide sequence ID" value="NM_103631.1"/>
</dbReference>
<dbReference type="SMR" id="F4HT77"/>
<dbReference type="FunCoup" id="F4HT77">
    <property type="interactions" value="17"/>
</dbReference>
<dbReference type="STRING" id="3702.F4HT77"/>
<dbReference type="PaxDb" id="3702-AT1G47370.1"/>
<dbReference type="EnsemblPlants" id="AT1G47370.1">
    <property type="protein sequence ID" value="AT1G47370.1"/>
    <property type="gene ID" value="AT1G47370"/>
</dbReference>
<dbReference type="GeneID" id="841140"/>
<dbReference type="Gramene" id="AT1G47370.1">
    <property type="protein sequence ID" value="AT1G47370.1"/>
    <property type="gene ID" value="AT1G47370"/>
</dbReference>
<dbReference type="KEGG" id="ath:AT1G47370"/>
<dbReference type="Araport" id="AT1G47370"/>
<dbReference type="TAIR" id="AT1G47370">
    <property type="gene designation" value="RBA1"/>
</dbReference>
<dbReference type="eggNOG" id="KOG0619">
    <property type="taxonomic scope" value="Eukaryota"/>
</dbReference>
<dbReference type="HOGENOM" id="CLU_763668_0_0_1"/>
<dbReference type="InParanoid" id="F4HT77"/>
<dbReference type="PRO" id="PR:F4HT77"/>
<dbReference type="Proteomes" id="UP000006548">
    <property type="component" value="Chromosome 1"/>
</dbReference>
<dbReference type="ExpressionAtlas" id="F4HT77">
    <property type="expression patterns" value="baseline and differential"/>
</dbReference>
<dbReference type="GO" id="GO:0005737">
    <property type="term" value="C:cytoplasm"/>
    <property type="evidence" value="ECO:0007669"/>
    <property type="project" value="UniProtKB-SubCell"/>
</dbReference>
<dbReference type="GO" id="GO:0005654">
    <property type="term" value="C:nucleoplasm"/>
    <property type="evidence" value="ECO:0007669"/>
    <property type="project" value="UniProtKB-SubCell"/>
</dbReference>
<dbReference type="GO" id="GO:0005634">
    <property type="term" value="C:nucleus"/>
    <property type="evidence" value="ECO:0000314"/>
    <property type="project" value="TAIR"/>
</dbReference>
<dbReference type="GO" id="GO:0016787">
    <property type="term" value="F:hydrolase activity"/>
    <property type="evidence" value="ECO:0000315"/>
    <property type="project" value="UniProtKB"/>
</dbReference>
<dbReference type="GO" id="GO:0003953">
    <property type="term" value="F:NAD+ nucleosidase activity"/>
    <property type="evidence" value="ECO:0000314"/>
    <property type="project" value="UniProtKB"/>
</dbReference>
<dbReference type="GO" id="GO:0061809">
    <property type="term" value="F:NAD+ nucleosidase activity, cyclic ADP-ribose generating"/>
    <property type="evidence" value="ECO:0007669"/>
    <property type="project" value="UniProtKB-EC"/>
</dbReference>
<dbReference type="GO" id="GO:0050135">
    <property type="term" value="F:NADP+ nucleosidase activity"/>
    <property type="evidence" value="ECO:0000314"/>
    <property type="project" value="UniProtKB"/>
</dbReference>
<dbReference type="GO" id="GO:0006171">
    <property type="term" value="P:cAMP biosynthetic process"/>
    <property type="evidence" value="ECO:0000315"/>
    <property type="project" value="UniProtKB"/>
</dbReference>
<dbReference type="GO" id="GO:0006182">
    <property type="term" value="P:cGMP biosynthetic process"/>
    <property type="evidence" value="ECO:0000315"/>
    <property type="project" value="UniProtKB"/>
</dbReference>
<dbReference type="GO" id="GO:0006952">
    <property type="term" value="P:defense response"/>
    <property type="evidence" value="ECO:0000315"/>
    <property type="project" value="UniProtKB"/>
</dbReference>
<dbReference type="GO" id="GO:0052542">
    <property type="term" value="P:defense response by callose deposition"/>
    <property type="evidence" value="ECO:0000315"/>
    <property type="project" value="TAIR"/>
</dbReference>
<dbReference type="GO" id="GO:0006308">
    <property type="term" value="P:DNA catabolic process"/>
    <property type="evidence" value="ECO:0000315"/>
    <property type="project" value="UniProtKB"/>
</dbReference>
<dbReference type="GO" id="GO:0012502">
    <property type="term" value="P:induction of programmed cell death"/>
    <property type="evidence" value="ECO:0000315"/>
    <property type="project" value="UniProtKB"/>
</dbReference>
<dbReference type="GO" id="GO:0019677">
    <property type="term" value="P:NAD catabolic process"/>
    <property type="evidence" value="ECO:0000314"/>
    <property type="project" value="UniProtKB"/>
</dbReference>
<dbReference type="GO" id="GO:0006742">
    <property type="term" value="P:NADP catabolic process"/>
    <property type="evidence" value="ECO:0000315"/>
    <property type="project" value="UniProtKB"/>
</dbReference>
<dbReference type="GO" id="GO:0034052">
    <property type="term" value="P:positive regulation of plant-type hypersensitive response"/>
    <property type="evidence" value="ECO:0000315"/>
    <property type="project" value="TAIR"/>
</dbReference>
<dbReference type="GO" id="GO:0043068">
    <property type="term" value="P:positive regulation of programmed cell death"/>
    <property type="evidence" value="ECO:0000314"/>
    <property type="project" value="UniProtKB"/>
</dbReference>
<dbReference type="GO" id="GO:0006401">
    <property type="term" value="P:RNA catabolic process"/>
    <property type="evidence" value="ECO:0000315"/>
    <property type="project" value="UniProtKB"/>
</dbReference>
<dbReference type="GO" id="GO:0007165">
    <property type="term" value="P:signal transduction"/>
    <property type="evidence" value="ECO:0000315"/>
    <property type="project" value="UniProtKB"/>
</dbReference>
<dbReference type="FunFam" id="3.40.50.10140:FF:000007">
    <property type="entry name" value="Disease resistance protein (TIR-NBS-LRR class)"/>
    <property type="match status" value="1"/>
</dbReference>
<dbReference type="Gene3D" id="3.40.50.10140">
    <property type="entry name" value="Toll/interleukin-1 receptor homology (TIR) domain"/>
    <property type="match status" value="1"/>
</dbReference>
<dbReference type="InterPro" id="IPR000157">
    <property type="entry name" value="TIR_dom"/>
</dbReference>
<dbReference type="InterPro" id="IPR035897">
    <property type="entry name" value="Toll_tir_struct_dom_sf"/>
</dbReference>
<dbReference type="PANTHER" id="PTHR32009:SF157">
    <property type="entry name" value="DISEASE RESISTANCE PROTEIN RBA1-RELATED"/>
    <property type="match status" value="1"/>
</dbReference>
<dbReference type="PANTHER" id="PTHR32009">
    <property type="entry name" value="TMV RESISTANCE PROTEIN N-LIKE"/>
    <property type="match status" value="1"/>
</dbReference>
<dbReference type="Pfam" id="PF01582">
    <property type="entry name" value="TIR"/>
    <property type="match status" value="1"/>
</dbReference>
<dbReference type="SMART" id="SM00255">
    <property type="entry name" value="TIR"/>
    <property type="match status" value="1"/>
</dbReference>
<dbReference type="SUPFAM" id="SSF52200">
    <property type="entry name" value="Toll/Interleukin receptor TIR domain"/>
    <property type="match status" value="1"/>
</dbReference>
<dbReference type="PROSITE" id="PS50104">
    <property type="entry name" value="TIR"/>
    <property type="match status" value="1"/>
</dbReference>
<keyword id="KW-0963">Cytoplasm</keyword>
<keyword id="KW-0378">Hydrolase</keyword>
<keyword id="KW-0520">NAD</keyword>
<keyword id="KW-0539">Nucleus</keyword>
<keyword id="KW-0611">Plant defense</keyword>
<keyword id="KW-1185">Reference proteome</keyword>
<organism>
    <name type="scientific">Arabidopsis thaliana</name>
    <name type="common">Mouse-ear cress</name>
    <dbReference type="NCBI Taxonomy" id="3702"/>
    <lineage>
        <taxon>Eukaryota</taxon>
        <taxon>Viridiplantae</taxon>
        <taxon>Streptophyta</taxon>
        <taxon>Embryophyta</taxon>
        <taxon>Tracheophyta</taxon>
        <taxon>Spermatophyta</taxon>
        <taxon>Magnoliopsida</taxon>
        <taxon>eudicotyledons</taxon>
        <taxon>Gunneridae</taxon>
        <taxon>Pentapetalae</taxon>
        <taxon>rosids</taxon>
        <taxon>malvids</taxon>
        <taxon>Brassicales</taxon>
        <taxon>Brassicaceae</taxon>
        <taxon>Camelineae</taxon>
        <taxon>Arabidopsis</taxon>
    </lineage>
</organism>
<feature type="chain" id="PRO_0000448795" description="Disease resistance protein RBA1">
    <location>
        <begin position="1"/>
        <end position="363"/>
    </location>
</feature>
<feature type="domain" description="TIR" evidence="2">
    <location>
        <begin position="12"/>
        <end position="175"/>
    </location>
</feature>
<feature type="active site" evidence="2 7">
    <location>
        <position position="86"/>
    </location>
</feature>
<feature type="binding site" evidence="1">
    <location>
        <begin position="21"/>
        <end position="26"/>
    </location>
    <ligand>
        <name>NAD(+)</name>
        <dbReference type="ChEBI" id="CHEBI:57540"/>
    </ligand>
</feature>
<feature type="binding site" evidence="1">
    <location>
        <position position="53"/>
    </location>
    <ligand>
        <name>NAD(+)</name>
        <dbReference type="ChEBI" id="CHEBI:57540"/>
    </ligand>
</feature>
<feature type="mutagenesis site" description="Decreased ability to induce cell death due to impaired homooligomerization." evidence="3">
    <original>SH</original>
    <variation>AA</variation>
    <location>
        <begin position="31"/>
        <end position="32"/>
    </location>
</feature>
<feature type="mutagenesis site" description="Decreased ability to induce cell death." evidence="3">
    <original>S</original>
    <variation>A</variation>
    <location>
        <position position="31"/>
    </location>
</feature>
<feature type="mutagenesis site" description="Abolished ability to induced cell death." evidence="3">
    <original>H</original>
    <variation>A</variation>
    <location>
        <position position="32"/>
    </location>
</feature>
<feature type="mutagenesis site" description="Loss of NAD(+) hydrolase activity." evidence="4">
    <original>E</original>
    <variation>A</variation>
    <location>
        <position position="86"/>
    </location>
</feature>
<feature type="mutagenesis site" description="Decreased ability to induce cell death due to impaired homooligomerization." evidence="3">
    <original>K</original>
    <variation>E</variation>
    <location>
        <position position="149"/>
    </location>
</feature>
<feature type="mutagenesis site" description="Abolished ability to induce cell death." evidence="3">
    <original>G</original>
    <variation>R</variation>
    <location>
        <position position="151"/>
    </location>
</feature>
<name>RBA1_ARATH</name>